<accession>Q5PNH2</accession>
<reference key="1">
    <citation type="journal article" date="2004" name="Nat. Genet.">
        <title>Comparison of genome degradation in Paratyphi A and Typhi, human-restricted serovars of Salmonella enterica that cause typhoid.</title>
        <authorList>
            <person name="McClelland M."/>
            <person name="Sanderson K.E."/>
            <person name="Clifton S.W."/>
            <person name="Latreille P."/>
            <person name="Porwollik S."/>
            <person name="Sabo A."/>
            <person name="Meyer R."/>
            <person name="Bieri T."/>
            <person name="Ozersky P."/>
            <person name="McLellan M."/>
            <person name="Harkins C.R."/>
            <person name="Wang C."/>
            <person name="Nguyen C."/>
            <person name="Berghoff A."/>
            <person name="Elliott G."/>
            <person name="Kohlberg S."/>
            <person name="Strong C."/>
            <person name="Du F."/>
            <person name="Carter J."/>
            <person name="Kremizki C."/>
            <person name="Layman D."/>
            <person name="Leonard S."/>
            <person name="Sun H."/>
            <person name="Fulton L."/>
            <person name="Nash W."/>
            <person name="Miner T."/>
            <person name="Minx P."/>
            <person name="Delehaunty K."/>
            <person name="Fronick C."/>
            <person name="Magrini V."/>
            <person name="Nhan M."/>
            <person name="Warren W."/>
            <person name="Florea L."/>
            <person name="Spieth J."/>
            <person name="Wilson R.K."/>
        </authorList>
    </citation>
    <scope>NUCLEOTIDE SEQUENCE [LARGE SCALE GENOMIC DNA]</scope>
    <source>
        <strain>ATCC 9150 / SARB42</strain>
    </source>
</reference>
<comment type="function">
    <text evidence="1">Co-chaperone involved in the maturation of iron-sulfur cluster-containing proteins. Seems to help targeting proteins to be folded toward HscA.</text>
</comment>
<comment type="subunit">
    <text evidence="1">Interacts with HscA and stimulates its ATPase activity. Interacts with IscU.</text>
</comment>
<comment type="similarity">
    <text evidence="1">Belongs to the HscB family.</text>
</comment>
<gene>
    <name evidence="1" type="primary">hscB</name>
    <name type="ordered locus">SPA0326</name>
</gene>
<feature type="chain" id="PRO_0000070987" description="Co-chaperone protein HscB">
    <location>
        <begin position="1"/>
        <end position="171"/>
    </location>
</feature>
<feature type="domain" description="J" evidence="1">
    <location>
        <begin position="2"/>
        <end position="74"/>
    </location>
</feature>
<proteinExistence type="inferred from homology"/>
<organism>
    <name type="scientific">Salmonella paratyphi A (strain ATCC 9150 / SARB42)</name>
    <dbReference type="NCBI Taxonomy" id="295319"/>
    <lineage>
        <taxon>Bacteria</taxon>
        <taxon>Pseudomonadati</taxon>
        <taxon>Pseudomonadota</taxon>
        <taxon>Gammaproteobacteria</taxon>
        <taxon>Enterobacterales</taxon>
        <taxon>Enterobacteriaceae</taxon>
        <taxon>Salmonella</taxon>
    </lineage>
</organism>
<sequence>MDYFTLFGLPARYQIDTQALSFRFQDLQRQYHPDKFANGTQAQQLAAVQQSATINQAWQTLRHPLTRAEYLLSLHGFDLASEQHTVRDTAFLMEQLTLREELDDIEQSKDDARLESFIKRVQKMFDARLQQMVEQLDNAAWDAAADTVRKLRFLDKLRSSAEQLEEKLLDF</sequence>
<protein>
    <recommendedName>
        <fullName evidence="1">Co-chaperone protein HscB</fullName>
    </recommendedName>
    <alternativeName>
        <fullName evidence="1">Hsc20</fullName>
    </alternativeName>
</protein>
<keyword id="KW-0143">Chaperone</keyword>
<name>HSCB_SALPA</name>
<evidence type="ECO:0000255" key="1">
    <source>
        <dbReference type="HAMAP-Rule" id="MF_00682"/>
    </source>
</evidence>
<dbReference type="EMBL" id="CP000026">
    <property type="protein sequence ID" value="AAV76345.1"/>
    <property type="molecule type" value="Genomic_DNA"/>
</dbReference>
<dbReference type="RefSeq" id="WP_000384391.1">
    <property type="nucleotide sequence ID" value="NC_006511.1"/>
</dbReference>
<dbReference type="SMR" id="Q5PNH2"/>
<dbReference type="KEGG" id="spt:SPA0326"/>
<dbReference type="HOGENOM" id="CLU_068529_2_0_6"/>
<dbReference type="Proteomes" id="UP000008185">
    <property type="component" value="Chromosome"/>
</dbReference>
<dbReference type="GO" id="GO:1990230">
    <property type="term" value="C:iron-sulfur cluster transfer complex"/>
    <property type="evidence" value="ECO:0007669"/>
    <property type="project" value="TreeGrafter"/>
</dbReference>
<dbReference type="GO" id="GO:0001671">
    <property type="term" value="F:ATPase activator activity"/>
    <property type="evidence" value="ECO:0007669"/>
    <property type="project" value="InterPro"/>
</dbReference>
<dbReference type="GO" id="GO:0051087">
    <property type="term" value="F:protein-folding chaperone binding"/>
    <property type="evidence" value="ECO:0007669"/>
    <property type="project" value="InterPro"/>
</dbReference>
<dbReference type="GO" id="GO:0044571">
    <property type="term" value="P:[2Fe-2S] cluster assembly"/>
    <property type="evidence" value="ECO:0007669"/>
    <property type="project" value="InterPro"/>
</dbReference>
<dbReference type="GO" id="GO:0051259">
    <property type="term" value="P:protein complex oligomerization"/>
    <property type="evidence" value="ECO:0007669"/>
    <property type="project" value="InterPro"/>
</dbReference>
<dbReference type="GO" id="GO:0006457">
    <property type="term" value="P:protein folding"/>
    <property type="evidence" value="ECO:0007669"/>
    <property type="project" value="UniProtKB-UniRule"/>
</dbReference>
<dbReference type="CDD" id="cd06257">
    <property type="entry name" value="DnaJ"/>
    <property type="match status" value="1"/>
</dbReference>
<dbReference type="FunFam" id="1.10.287.110:FF:000008">
    <property type="entry name" value="Co-chaperone protein HscB"/>
    <property type="match status" value="1"/>
</dbReference>
<dbReference type="FunFam" id="1.20.1280.20:FF:000001">
    <property type="entry name" value="Co-chaperone protein HscB"/>
    <property type="match status" value="1"/>
</dbReference>
<dbReference type="Gene3D" id="1.10.287.110">
    <property type="entry name" value="DnaJ domain"/>
    <property type="match status" value="1"/>
</dbReference>
<dbReference type="Gene3D" id="1.20.1280.20">
    <property type="entry name" value="HscB, C-terminal domain"/>
    <property type="match status" value="1"/>
</dbReference>
<dbReference type="HAMAP" id="MF_00682">
    <property type="entry name" value="HscB"/>
    <property type="match status" value="1"/>
</dbReference>
<dbReference type="InterPro" id="IPR001623">
    <property type="entry name" value="DnaJ_domain"/>
</dbReference>
<dbReference type="InterPro" id="IPR004640">
    <property type="entry name" value="HscB"/>
</dbReference>
<dbReference type="InterPro" id="IPR036386">
    <property type="entry name" value="HscB_C_sf"/>
</dbReference>
<dbReference type="InterPro" id="IPR009073">
    <property type="entry name" value="HscB_oligo_C"/>
</dbReference>
<dbReference type="InterPro" id="IPR036869">
    <property type="entry name" value="J_dom_sf"/>
</dbReference>
<dbReference type="NCBIfam" id="TIGR00714">
    <property type="entry name" value="hscB"/>
    <property type="match status" value="1"/>
</dbReference>
<dbReference type="NCBIfam" id="NF003449">
    <property type="entry name" value="PRK05014.1"/>
    <property type="match status" value="1"/>
</dbReference>
<dbReference type="PANTHER" id="PTHR14021">
    <property type="entry name" value="IRON-SULFUR CLUSTER CO-CHAPERONE PROTEIN HSCB"/>
    <property type="match status" value="1"/>
</dbReference>
<dbReference type="PANTHER" id="PTHR14021:SF15">
    <property type="entry name" value="IRON-SULFUR CLUSTER CO-CHAPERONE PROTEIN HSCB"/>
    <property type="match status" value="1"/>
</dbReference>
<dbReference type="Pfam" id="PF07743">
    <property type="entry name" value="HSCB_C"/>
    <property type="match status" value="1"/>
</dbReference>
<dbReference type="SMART" id="SM00271">
    <property type="entry name" value="DnaJ"/>
    <property type="match status" value="1"/>
</dbReference>
<dbReference type="SUPFAM" id="SSF46565">
    <property type="entry name" value="Chaperone J-domain"/>
    <property type="match status" value="1"/>
</dbReference>
<dbReference type="SUPFAM" id="SSF47144">
    <property type="entry name" value="HSC20 (HSCB), C-terminal oligomerisation domain"/>
    <property type="match status" value="1"/>
</dbReference>
<dbReference type="PROSITE" id="PS50076">
    <property type="entry name" value="DNAJ_2"/>
    <property type="match status" value="1"/>
</dbReference>